<keyword id="KW-0067">ATP-binding</keyword>
<keyword id="KW-0436">Ligase</keyword>
<keyword id="KW-0547">Nucleotide-binding</keyword>
<keyword id="KW-0648">Protein biosynthesis</keyword>
<feature type="chain" id="PRO_1000015944" description="Aspartyl/glutamyl-tRNA(Asn/Gln) amidotransferase subunit B">
    <location>
        <begin position="1"/>
        <end position="490"/>
    </location>
</feature>
<organism>
    <name type="scientific">Burkholderia mallei (strain NCTC 10229)</name>
    <dbReference type="NCBI Taxonomy" id="412022"/>
    <lineage>
        <taxon>Bacteria</taxon>
        <taxon>Pseudomonadati</taxon>
        <taxon>Pseudomonadota</taxon>
        <taxon>Betaproteobacteria</taxon>
        <taxon>Burkholderiales</taxon>
        <taxon>Burkholderiaceae</taxon>
        <taxon>Burkholderia</taxon>
        <taxon>pseudomallei group</taxon>
    </lineage>
</organism>
<name>GATB_BURM9</name>
<gene>
    <name evidence="1" type="primary">gatB</name>
    <name type="ordered locus">BMA10229_A2297</name>
</gene>
<evidence type="ECO:0000255" key="1">
    <source>
        <dbReference type="HAMAP-Rule" id="MF_00121"/>
    </source>
</evidence>
<accession>A2S8J0</accession>
<dbReference type="EC" id="6.3.5.-" evidence="1"/>
<dbReference type="EMBL" id="CP000546">
    <property type="protein sequence ID" value="ABN01644.1"/>
    <property type="molecule type" value="Genomic_DNA"/>
</dbReference>
<dbReference type="RefSeq" id="WP_004190092.1">
    <property type="nucleotide sequence ID" value="NC_008836.1"/>
</dbReference>
<dbReference type="SMR" id="A2S8J0"/>
<dbReference type="GeneID" id="92977943"/>
<dbReference type="KEGG" id="bml:BMA10229_A2297"/>
<dbReference type="HOGENOM" id="CLU_019240_0_0_4"/>
<dbReference type="Proteomes" id="UP000002283">
    <property type="component" value="Chromosome I"/>
</dbReference>
<dbReference type="GO" id="GO:0050566">
    <property type="term" value="F:asparaginyl-tRNA synthase (glutamine-hydrolyzing) activity"/>
    <property type="evidence" value="ECO:0007669"/>
    <property type="project" value="RHEA"/>
</dbReference>
<dbReference type="GO" id="GO:0005524">
    <property type="term" value="F:ATP binding"/>
    <property type="evidence" value="ECO:0007669"/>
    <property type="project" value="UniProtKB-KW"/>
</dbReference>
<dbReference type="GO" id="GO:0050567">
    <property type="term" value="F:glutaminyl-tRNA synthase (glutamine-hydrolyzing) activity"/>
    <property type="evidence" value="ECO:0007669"/>
    <property type="project" value="UniProtKB-UniRule"/>
</dbReference>
<dbReference type="GO" id="GO:0070681">
    <property type="term" value="P:glutaminyl-tRNAGln biosynthesis via transamidation"/>
    <property type="evidence" value="ECO:0007669"/>
    <property type="project" value="TreeGrafter"/>
</dbReference>
<dbReference type="GO" id="GO:0006412">
    <property type="term" value="P:translation"/>
    <property type="evidence" value="ECO:0007669"/>
    <property type="project" value="UniProtKB-UniRule"/>
</dbReference>
<dbReference type="FunFam" id="1.10.10.410:FF:000001">
    <property type="entry name" value="Aspartyl/glutamyl-tRNA(Asn/Gln) amidotransferase subunit B"/>
    <property type="match status" value="1"/>
</dbReference>
<dbReference type="FunFam" id="1.10.150.380:FF:000001">
    <property type="entry name" value="Aspartyl/glutamyl-tRNA(Asn/Gln) amidotransferase subunit B"/>
    <property type="match status" value="1"/>
</dbReference>
<dbReference type="Gene3D" id="1.10.10.410">
    <property type="match status" value="1"/>
</dbReference>
<dbReference type="Gene3D" id="1.10.150.380">
    <property type="entry name" value="GatB domain, N-terminal subdomain"/>
    <property type="match status" value="1"/>
</dbReference>
<dbReference type="HAMAP" id="MF_00121">
    <property type="entry name" value="GatB"/>
    <property type="match status" value="1"/>
</dbReference>
<dbReference type="InterPro" id="IPR017959">
    <property type="entry name" value="Asn/Gln-tRNA_amidoTrfase_suB/E"/>
</dbReference>
<dbReference type="InterPro" id="IPR006075">
    <property type="entry name" value="Asn/Gln-tRNA_Trfase_suB/E_cat"/>
</dbReference>
<dbReference type="InterPro" id="IPR018027">
    <property type="entry name" value="Asn/Gln_amidotransferase"/>
</dbReference>
<dbReference type="InterPro" id="IPR003789">
    <property type="entry name" value="Asn/Gln_tRNA_amidoTrase-B-like"/>
</dbReference>
<dbReference type="InterPro" id="IPR004413">
    <property type="entry name" value="GatB"/>
</dbReference>
<dbReference type="InterPro" id="IPR042114">
    <property type="entry name" value="GatB_C_1"/>
</dbReference>
<dbReference type="InterPro" id="IPR023168">
    <property type="entry name" value="GatB_Yqey_C_2"/>
</dbReference>
<dbReference type="InterPro" id="IPR017958">
    <property type="entry name" value="Gln-tRNA_amidoTrfase_suB_CS"/>
</dbReference>
<dbReference type="InterPro" id="IPR014746">
    <property type="entry name" value="Gln_synth/guanido_kin_cat_dom"/>
</dbReference>
<dbReference type="NCBIfam" id="TIGR00133">
    <property type="entry name" value="gatB"/>
    <property type="match status" value="1"/>
</dbReference>
<dbReference type="NCBIfam" id="NF004012">
    <property type="entry name" value="PRK05477.1-2"/>
    <property type="match status" value="1"/>
</dbReference>
<dbReference type="NCBIfam" id="NF004014">
    <property type="entry name" value="PRK05477.1-4"/>
    <property type="match status" value="1"/>
</dbReference>
<dbReference type="NCBIfam" id="NF004015">
    <property type="entry name" value="PRK05477.1-5"/>
    <property type="match status" value="1"/>
</dbReference>
<dbReference type="PANTHER" id="PTHR11659">
    <property type="entry name" value="GLUTAMYL-TRNA GLN AMIDOTRANSFERASE SUBUNIT B MITOCHONDRIAL AND PROKARYOTIC PET112-RELATED"/>
    <property type="match status" value="1"/>
</dbReference>
<dbReference type="PANTHER" id="PTHR11659:SF0">
    <property type="entry name" value="GLUTAMYL-TRNA(GLN) AMIDOTRANSFERASE SUBUNIT B, MITOCHONDRIAL"/>
    <property type="match status" value="1"/>
</dbReference>
<dbReference type="Pfam" id="PF02934">
    <property type="entry name" value="GatB_N"/>
    <property type="match status" value="1"/>
</dbReference>
<dbReference type="Pfam" id="PF02637">
    <property type="entry name" value="GatB_Yqey"/>
    <property type="match status" value="1"/>
</dbReference>
<dbReference type="SMART" id="SM00845">
    <property type="entry name" value="GatB_Yqey"/>
    <property type="match status" value="1"/>
</dbReference>
<dbReference type="SUPFAM" id="SSF89095">
    <property type="entry name" value="GatB/YqeY motif"/>
    <property type="match status" value="1"/>
</dbReference>
<dbReference type="SUPFAM" id="SSF55931">
    <property type="entry name" value="Glutamine synthetase/guanido kinase"/>
    <property type="match status" value="1"/>
</dbReference>
<dbReference type="PROSITE" id="PS01234">
    <property type="entry name" value="GATB"/>
    <property type="match status" value="1"/>
</dbReference>
<proteinExistence type="inferred from homology"/>
<comment type="function">
    <text evidence="1">Allows the formation of correctly charged Asn-tRNA(Asn) or Gln-tRNA(Gln) through the transamidation of misacylated Asp-tRNA(Asn) or Glu-tRNA(Gln) in organisms which lack either or both of asparaginyl-tRNA or glutaminyl-tRNA synthetases. The reaction takes place in the presence of glutamine and ATP through an activated phospho-Asp-tRNA(Asn) or phospho-Glu-tRNA(Gln).</text>
</comment>
<comment type="catalytic activity">
    <reaction evidence="1">
        <text>L-glutamyl-tRNA(Gln) + L-glutamine + ATP + H2O = L-glutaminyl-tRNA(Gln) + L-glutamate + ADP + phosphate + H(+)</text>
        <dbReference type="Rhea" id="RHEA:17521"/>
        <dbReference type="Rhea" id="RHEA-COMP:9681"/>
        <dbReference type="Rhea" id="RHEA-COMP:9684"/>
        <dbReference type="ChEBI" id="CHEBI:15377"/>
        <dbReference type="ChEBI" id="CHEBI:15378"/>
        <dbReference type="ChEBI" id="CHEBI:29985"/>
        <dbReference type="ChEBI" id="CHEBI:30616"/>
        <dbReference type="ChEBI" id="CHEBI:43474"/>
        <dbReference type="ChEBI" id="CHEBI:58359"/>
        <dbReference type="ChEBI" id="CHEBI:78520"/>
        <dbReference type="ChEBI" id="CHEBI:78521"/>
        <dbReference type="ChEBI" id="CHEBI:456216"/>
    </reaction>
</comment>
<comment type="catalytic activity">
    <reaction evidence="1">
        <text>L-aspartyl-tRNA(Asn) + L-glutamine + ATP + H2O = L-asparaginyl-tRNA(Asn) + L-glutamate + ADP + phosphate + 2 H(+)</text>
        <dbReference type="Rhea" id="RHEA:14513"/>
        <dbReference type="Rhea" id="RHEA-COMP:9674"/>
        <dbReference type="Rhea" id="RHEA-COMP:9677"/>
        <dbReference type="ChEBI" id="CHEBI:15377"/>
        <dbReference type="ChEBI" id="CHEBI:15378"/>
        <dbReference type="ChEBI" id="CHEBI:29985"/>
        <dbReference type="ChEBI" id="CHEBI:30616"/>
        <dbReference type="ChEBI" id="CHEBI:43474"/>
        <dbReference type="ChEBI" id="CHEBI:58359"/>
        <dbReference type="ChEBI" id="CHEBI:78515"/>
        <dbReference type="ChEBI" id="CHEBI:78516"/>
        <dbReference type="ChEBI" id="CHEBI:456216"/>
    </reaction>
</comment>
<comment type="subunit">
    <text evidence="1">Heterotrimer of A, B and C subunits.</text>
</comment>
<comment type="similarity">
    <text evidence="1">Belongs to the GatB/GatE family. GatB subfamily.</text>
</comment>
<sequence length="490" mass="53365">MTQWEVVIGLETHAQLSTVSKIFSGASTQFGAQPNTQACPVDLALPGVLPVLNRGAVERAIRFGLAIGATVAPRSVFARKNYFYPDLPKGYQISQYEIPVVQGGQITIQVPANEKAGKQAYSKTVNLTRAHLEEDAGKSLHEDFAGMTGIDLNRAGTPLLEIVTEPEMRSAAEAVAYAKALHGLVMWLGICDGNMQEGSFRCDANVSVRPVGQEKFGTRAEIKNLNSFRFLEDAINYEVRRQIELIEDGGEVVQETRLYDPDKRETRSMRSKEDAHDYRYFPDPDLMPLVIGADWIARVKGEMPELPAVMQQRFIEQYGVSAYDAGVLTSTKAMAEYFEALVAKAGAANAKLAANWLMGDVSSQLNRDGIDIDACPVSAAQLALVLQRIADGTISNKIAKEIFVTIWDEKAADEGAADRIIEAKGLKQISDTGALEAIIDEVLAANAKSVEEFRAGKDKAFNALVGQAMKATKGKANPQQVNELLKKKLG</sequence>
<protein>
    <recommendedName>
        <fullName evidence="1">Aspartyl/glutamyl-tRNA(Asn/Gln) amidotransferase subunit B</fullName>
        <shortName evidence="1">Asp/Glu-ADT subunit B</shortName>
        <ecNumber evidence="1">6.3.5.-</ecNumber>
    </recommendedName>
</protein>
<reference key="1">
    <citation type="journal article" date="2010" name="Genome Biol. Evol.">
        <title>Continuing evolution of Burkholderia mallei through genome reduction and large-scale rearrangements.</title>
        <authorList>
            <person name="Losada L."/>
            <person name="Ronning C.M."/>
            <person name="DeShazer D."/>
            <person name="Woods D."/>
            <person name="Fedorova N."/>
            <person name="Kim H.S."/>
            <person name="Shabalina S.A."/>
            <person name="Pearson T.R."/>
            <person name="Brinkac L."/>
            <person name="Tan P."/>
            <person name="Nandi T."/>
            <person name="Crabtree J."/>
            <person name="Badger J."/>
            <person name="Beckstrom-Sternberg S."/>
            <person name="Saqib M."/>
            <person name="Schutzer S.E."/>
            <person name="Keim P."/>
            <person name="Nierman W.C."/>
        </authorList>
    </citation>
    <scope>NUCLEOTIDE SEQUENCE [LARGE SCALE GENOMIC DNA]</scope>
    <source>
        <strain>NCTC 10229</strain>
    </source>
</reference>